<proteinExistence type="evidence at protein level"/>
<keyword id="KW-0027">Amidation</keyword>
<keyword id="KW-0123">Cardiotoxin</keyword>
<keyword id="KW-0165">Cleavage on pair of basic residues</keyword>
<keyword id="KW-0903">Direct protein sequencing</keyword>
<keyword id="KW-1015">Disulfide bond</keyword>
<keyword id="KW-0964">Secreted</keyword>
<keyword id="KW-0732">Signal</keyword>
<keyword id="KW-0800">Toxin</keyword>
<gene>
    <name type="primary">conoCAP</name>
</gene>
<evidence type="ECO:0000255" key="1"/>
<evidence type="ECO:0000256" key="2">
    <source>
        <dbReference type="SAM" id="MobiDB-lite"/>
    </source>
</evidence>
<evidence type="ECO:0000269" key="3">
    <source>
    </source>
</evidence>
<evidence type="ECO:0000269" key="4">
    <source>
    </source>
</evidence>
<evidence type="ECO:0000305" key="5"/>
<evidence type="ECO:0000305" key="6">
    <source>
    </source>
</evidence>
<comment type="function">
    <molecule>ConoCAP-a</molecule>
    <text>In contrast to other members of the CCAP family which are cardio-accelerators, conoCAP-a decreases the heart frequency in Drosophila larvae (26%), rats and zebrafish embryos. It also reduces the blood pressure in rats. It decreases systolic calcium in ventricular cardiac myocytes, indicating that it may act via impairment of intracellular calcium trafficking.</text>
</comment>
<comment type="function">
    <molecule>ConoCAP-b</molecule>
    <text>Synthetic conoCAP-b decreases the heart frequency of 23% in Drosophila larvae.</text>
</comment>
<comment type="function">
    <molecule>ConoCAP-c</molecule>
    <text>Synthetic conoCAP-c decreases the heart frequency of 12% in Drosophila larvae.</text>
</comment>
<comment type="subcellular location">
    <subcellularLocation>
        <location>Secreted</location>
    </subcellularLocation>
</comment>
<comment type="tissue specificity">
    <text>Expressed by the venom duct.</text>
</comment>
<comment type="mass spectrometry" mass="1148.6" method="MALDI" evidence="4">
    <molecule>ConoCAP-a</molecule>
    <text>Monoisotopic.</text>
</comment>
<name>CCAP_CONVL</name>
<dbReference type="EMBL" id="FN868446">
    <property type="protein sequence ID" value="CBM40422.1"/>
    <property type="molecule type" value="mRNA"/>
</dbReference>
<dbReference type="EMBL" id="FN868447">
    <property type="protein sequence ID" value="CBM40423.1"/>
    <property type="molecule type" value="mRNA"/>
</dbReference>
<dbReference type="GO" id="GO:0005576">
    <property type="term" value="C:extracellular region"/>
    <property type="evidence" value="ECO:0000314"/>
    <property type="project" value="UniProtKB"/>
</dbReference>
<dbReference type="GO" id="GO:0005615">
    <property type="term" value="C:extracellular space"/>
    <property type="evidence" value="ECO:0000304"/>
    <property type="project" value="UniProtKB"/>
</dbReference>
<dbReference type="GO" id="GO:0090729">
    <property type="term" value="F:toxin activity"/>
    <property type="evidence" value="ECO:0007669"/>
    <property type="project" value="UniProtKB-KW"/>
</dbReference>
<dbReference type="GO" id="GO:0044556">
    <property type="term" value="P:venom-mediated reduction of heart rate"/>
    <property type="evidence" value="ECO:0000314"/>
    <property type="project" value="UniProtKB"/>
</dbReference>
<accession>E3PQQ8</accession>
<accession>E3PQQ7</accession>
<feature type="signal peptide" evidence="1">
    <location>
        <begin position="1"/>
        <end position="21"/>
    </location>
</feature>
<feature type="propeptide" id="PRO_0000405955" evidence="1">
    <location>
        <begin position="22"/>
        <end position="48"/>
    </location>
</feature>
<feature type="peptide" id="PRO_0000405956" description="ConoCAP-b" evidence="5">
    <location>
        <begin position="51"/>
        <end position="60"/>
    </location>
</feature>
<feature type="propeptide" id="PRO_0000405957" evidence="1">
    <location>
        <begin position="63"/>
        <end position="82"/>
    </location>
</feature>
<feature type="peptide" id="PRO_0000405958" description="ConoCAP-a" evidence="3 4">
    <location>
        <begin position="85"/>
        <end position="94"/>
    </location>
</feature>
<feature type="propeptide" id="PRO_0000405959" evidence="1">
    <location>
        <begin position="98"/>
        <end position="160"/>
    </location>
</feature>
<feature type="peptide" id="PRO_0000405960" description="ConoCAP-c" evidence="5">
    <location>
        <begin position="163"/>
        <end position="173"/>
    </location>
</feature>
<feature type="propeptide" id="PRO_0000405961" evidence="1">
    <location>
        <begin position="177"/>
        <end position="207"/>
    </location>
</feature>
<feature type="region of interest" description="Disordered" evidence="2">
    <location>
        <begin position="131"/>
        <end position="155"/>
    </location>
</feature>
<feature type="compositionally biased region" description="Basic and acidic residues" evidence="2">
    <location>
        <begin position="143"/>
        <end position="152"/>
    </location>
</feature>
<feature type="modified residue" description="Glycine amide" evidence="6">
    <location>
        <position position="60"/>
    </location>
</feature>
<feature type="modified residue" description="Asparagine amide" evidence="3">
    <location>
        <position position="94"/>
    </location>
</feature>
<feature type="modified residue" description="Glycine amide" evidence="6">
    <location>
        <position position="173"/>
    </location>
</feature>
<feature type="disulfide bond" evidence="5">
    <location>
        <begin position="53"/>
        <end position="59"/>
    </location>
</feature>
<feature type="disulfide bond">
    <location>
        <begin position="87"/>
        <end position="92"/>
    </location>
</feature>
<feature type="disulfide bond" evidence="5">
    <location>
        <begin position="165"/>
        <end position="171"/>
    </location>
</feature>
<feature type="mutagenesis site" description="Partial loss of activity of conoCAP-a.">
    <location>
        <begin position="85"/>
        <end position="86"/>
    </location>
</feature>
<feature type="mutagenesis site" description="Partial loss of activity of conoCAP-a.">
    <original>P</original>
    <variation>A</variation>
    <location>
        <position position="85"/>
    </location>
</feature>
<feature type="mutagenesis site" description="Partial loss of activity of conoCAP-a.">
    <location>
        <position position="85"/>
    </location>
</feature>
<feature type="mutagenesis site" description="Complete loss of activity of conoCAP-a.">
    <original>F</original>
    <variation>A</variation>
    <location>
        <position position="86"/>
    </location>
</feature>
<feature type="mutagenesis site" description="Complete loss of activity of conoCAP-a." evidence="3">
    <original>C</original>
    <variation>A</variation>
    <location>
        <position position="87"/>
    </location>
</feature>
<feature type="mutagenesis site" description="No change of activity of conoCAP-a.">
    <original>N</original>
    <variation>A</variation>
    <location>
        <position position="88"/>
    </location>
</feature>
<feature type="mutagenesis site" description="No change of activity of conoCAP-a.">
    <original>S</original>
    <variation>A</variation>
    <location>
        <position position="89"/>
    </location>
</feature>
<feature type="mutagenesis site" description="No change of activity of conoCAP-a.">
    <original>F</original>
    <variation>A</variation>
    <location>
        <position position="90"/>
    </location>
</feature>
<feature type="mutagenesis site" description="No change of activity of conoCAP-a.">
    <original>G</original>
    <variation>A</variation>
    <location>
        <position position="91"/>
    </location>
</feature>
<feature type="mutagenesis site" description="Complete loss of activity of conoCAP-a." evidence="3">
    <original>C</original>
    <variation>A</variation>
    <location>
        <position position="92"/>
    </location>
</feature>
<feature type="mutagenesis site" description="No change of activity of conoCAP-a.">
    <location>
        <begin position="93"/>
        <end position="94"/>
    </location>
</feature>
<feature type="mutagenesis site" description="No change of activity of conoCAP-a.">
    <original>Y</original>
    <variation>A</variation>
    <location>
        <position position="93"/>
    </location>
</feature>
<feature type="mutagenesis site" description="No change of activity of conoCAP-a.">
    <original>N</original>
    <variation>A</variation>
    <location>
        <position position="94"/>
    </location>
</feature>
<feature type="mutagenesis site" description="No change of activity of conoCAP-a.">
    <location>
        <position position="94"/>
    </location>
</feature>
<feature type="sequence conflict" description="In Ref. 1; CBM40422." evidence="5" ref="1">
    <original>F</original>
    <variation>L</variation>
    <location>
        <position position="164"/>
    </location>
</feature>
<sequence length="207" mass="23089">MVSLGHVLFVILLPVLLPVAADDPDDQMLSQISLPSSSRSEYDDNDVSKRVFCNGFTGCGGRHRDRSRRQERYGKRLIPVLAKRPFCNSFGCYNGKRSLSGAGPALSTPVDPSRNNKARTMARMLDAAASARHEQQQQLLQQREQRGLESRDPAASGDLSKRLFCNGYGGCRGGKRTLYSPWLERMNEVADDRSARNALCTRLGWRE</sequence>
<reference key="1">
    <citation type="journal article" date="2010" name="J. Biol. Chem.">
        <title>Functional hypervariability and gene diversity of cardioactive neuropeptides.</title>
        <authorList>
            <person name="Moeller C."/>
            <person name="Melaun C."/>
            <person name="Castillo C."/>
            <person name="Diaz M.E."/>
            <person name="Renzelman C.M."/>
            <person name="Estrada O."/>
            <person name="Kuch U."/>
            <person name="Lokey S."/>
            <person name="Mari F."/>
        </authorList>
    </citation>
    <scope>NUCLEOTIDE SEQUENCE [MRNA]</scope>
    <scope>PROTEIN SEQUENCE OF 85-94</scope>
    <scope>SYNTHESIS OF 51-60; 85-94 AND 163-173</scope>
    <scope>FUNCTION</scope>
    <scope>AMIDATION AT GLY-60 AND GLY-173</scope>
    <scope>DISULFIDE BOND</scope>
    <scope>MASS SPECTROMETRY</scope>
    <scope>ALANINE-SCANNING MUTAGENESIS</scope>
    <source>
        <tissue>Venom</tissue>
        <tissue>Venom duct</tissue>
    </source>
</reference>
<reference key="2">
    <citation type="journal article" date="2010" name="Peptides">
        <title>An unusual peptide from Conus villepinii: synthesis, solution structure, and cardioactivity.</title>
        <authorList>
            <person name="Miloslavina A."/>
            <person name="Ebert C."/>
            <person name="Tietze D."/>
            <person name="Ohlenschlaeger O."/>
            <person name="Englert C."/>
            <person name="Goerlach M."/>
            <person name="Imhof D."/>
        </authorList>
    </citation>
    <scope>PROTEIN SEQUENCE OF 85-94</scope>
    <scope>SYNTHESIS OF 85-94</scope>
    <scope>FUNCTION</scope>
    <scope>STRUCTURE BY NMR</scope>
    <scope>AMIDATION AT ASN-94</scope>
    <scope>DISULFIDE BOND</scope>
    <scope>MUTAGENESIS OF CYS-87 AND CYS-92</scope>
    <source>
        <tissue>Venom</tissue>
    </source>
</reference>
<protein>
    <recommendedName>
        <fullName>ConoCAP</fullName>
    </recommendedName>
    <component>
        <recommendedName>
            <fullName>ConoCAP-a</fullName>
        </recommendedName>
        <alternativeName>
            <fullName>CCAP-vil</fullName>
        </alternativeName>
    </component>
    <component>
        <recommendedName>
            <fullName>ConoCAP-b</fullName>
        </recommendedName>
    </component>
    <component>
        <recommendedName>
            <fullName>ConoCAP-c</fullName>
        </recommendedName>
    </component>
</protein>
<organism>
    <name type="scientific">Conus villepinii</name>
    <name type="common">Villepin's cone</name>
    <dbReference type="NCBI Taxonomy" id="257347"/>
    <lineage>
        <taxon>Eukaryota</taxon>
        <taxon>Metazoa</taxon>
        <taxon>Spiralia</taxon>
        <taxon>Lophotrochozoa</taxon>
        <taxon>Mollusca</taxon>
        <taxon>Gastropoda</taxon>
        <taxon>Caenogastropoda</taxon>
        <taxon>Neogastropoda</taxon>
        <taxon>Conoidea</taxon>
        <taxon>Conidae</taxon>
        <taxon>Conus</taxon>
        <taxon>Dauciconus</taxon>
    </lineage>
</organism>